<feature type="chain" id="PRO_0000224003" description="Large ribosomal subunit protein uL30">
    <location>
        <begin position="1"/>
        <end position="21" status="greater than"/>
    </location>
</feature>
<feature type="region of interest" description="Disordered" evidence="2">
    <location>
        <begin position="1"/>
        <end position="21"/>
    </location>
</feature>
<feature type="compositionally biased region" description="Polar residues" evidence="2">
    <location>
        <begin position="1"/>
        <end position="15"/>
    </location>
</feature>
<feature type="non-terminal residue">
    <location>
        <position position="21"/>
    </location>
</feature>
<dbReference type="GO" id="GO:1990904">
    <property type="term" value="C:ribonucleoprotein complex"/>
    <property type="evidence" value="ECO:0007669"/>
    <property type="project" value="UniProtKB-KW"/>
</dbReference>
<dbReference type="GO" id="GO:0005840">
    <property type="term" value="C:ribosome"/>
    <property type="evidence" value="ECO:0007669"/>
    <property type="project" value="UniProtKB-KW"/>
</dbReference>
<sequence>AKTENKTVTVRQTASPIXXXK</sequence>
<name>RL30_BREDI</name>
<protein>
    <recommendedName>
        <fullName evidence="3">Large ribosomal subunit protein uL30</fullName>
    </recommendedName>
    <alternativeName>
        <fullName>50S ribosomal protein L30</fullName>
    </alternativeName>
</protein>
<gene>
    <name type="primary">rpmD</name>
</gene>
<accession>Q9R4P8</accession>
<comment type="subunit">
    <text evidence="1">Part of the 50S ribosomal subunit.</text>
</comment>
<comment type="similarity">
    <text evidence="3">Belongs to the universal ribosomal protein uL30 family.</text>
</comment>
<keyword id="KW-0903">Direct protein sequencing</keyword>
<keyword id="KW-0687">Ribonucleoprotein</keyword>
<keyword id="KW-0689">Ribosomal protein</keyword>
<proteinExistence type="evidence at protein level"/>
<reference key="1">
    <citation type="journal article" date="1995" name="Int. J. Syst. Bacteriol.">
        <title>Comparative ribosomal protein sequence analyses of a phylogenetically defined genus, Pseudomonas, and its relatives.</title>
        <authorList>
            <person name="Ochi K."/>
        </authorList>
    </citation>
    <scope>PROTEIN SEQUENCE</scope>
    <source>
        <strain>ATCC 11568 / DSM 7234 / JCM 2788 / NCIB 9393 / NCTC 8545</strain>
    </source>
</reference>
<evidence type="ECO:0000250" key="1"/>
<evidence type="ECO:0000256" key="2">
    <source>
        <dbReference type="SAM" id="MobiDB-lite"/>
    </source>
</evidence>
<evidence type="ECO:0000305" key="3"/>
<organism>
    <name type="scientific">Brevundimonas diminuta</name>
    <name type="common">Pseudomonas diminuta</name>
    <dbReference type="NCBI Taxonomy" id="293"/>
    <lineage>
        <taxon>Bacteria</taxon>
        <taxon>Pseudomonadati</taxon>
        <taxon>Pseudomonadota</taxon>
        <taxon>Alphaproteobacteria</taxon>
        <taxon>Caulobacterales</taxon>
        <taxon>Caulobacteraceae</taxon>
        <taxon>Brevundimonas</taxon>
    </lineage>
</organism>